<keyword id="KW-0093">Biotin biosynthesis</keyword>
<keyword id="KW-0663">Pyridoxal phosphate</keyword>
<keyword id="KW-1185">Reference proteome</keyword>
<keyword id="KW-0808">Transferase</keyword>
<name>BIOF_SHISS</name>
<comment type="function">
    <text evidence="1">Catalyzes the decarboxylative condensation of pimeloyl-[acyl-carrier protein] and L-alanine to produce 8-amino-7-oxononanoate (AON), [acyl-carrier protein], and carbon dioxide.</text>
</comment>
<comment type="catalytic activity">
    <reaction evidence="1">
        <text>6-carboxyhexanoyl-[ACP] + L-alanine + H(+) = (8S)-8-amino-7-oxononanoate + holo-[ACP] + CO2</text>
        <dbReference type="Rhea" id="RHEA:42288"/>
        <dbReference type="Rhea" id="RHEA-COMP:9685"/>
        <dbReference type="Rhea" id="RHEA-COMP:9955"/>
        <dbReference type="ChEBI" id="CHEBI:15378"/>
        <dbReference type="ChEBI" id="CHEBI:16526"/>
        <dbReference type="ChEBI" id="CHEBI:57972"/>
        <dbReference type="ChEBI" id="CHEBI:64479"/>
        <dbReference type="ChEBI" id="CHEBI:78846"/>
        <dbReference type="ChEBI" id="CHEBI:149468"/>
        <dbReference type="EC" id="2.3.1.47"/>
    </reaction>
</comment>
<comment type="cofactor">
    <cofactor evidence="1">
        <name>pyridoxal 5'-phosphate</name>
        <dbReference type="ChEBI" id="CHEBI:597326"/>
    </cofactor>
</comment>
<comment type="pathway">
    <text evidence="1">Cofactor biosynthesis; biotin biosynthesis.</text>
</comment>
<comment type="subunit">
    <text evidence="1">Homodimer.</text>
</comment>
<comment type="similarity">
    <text evidence="1">Belongs to the class-II pyridoxal-phosphate-dependent aminotransferase family. BioF subfamily.</text>
</comment>
<dbReference type="EC" id="2.3.1.47" evidence="1"/>
<dbReference type="EMBL" id="CP000038">
    <property type="protein sequence ID" value="AAZ87504.1"/>
    <property type="molecule type" value="Genomic_DNA"/>
</dbReference>
<dbReference type="RefSeq" id="WP_000118857.1">
    <property type="nucleotide sequence ID" value="NC_007384.1"/>
</dbReference>
<dbReference type="SMR" id="Q3Z408"/>
<dbReference type="GeneID" id="93776654"/>
<dbReference type="KEGG" id="ssn:SSON_0755"/>
<dbReference type="HOGENOM" id="CLU_015846_11_2_6"/>
<dbReference type="UniPathway" id="UPA00078"/>
<dbReference type="Proteomes" id="UP000002529">
    <property type="component" value="Chromosome"/>
</dbReference>
<dbReference type="GO" id="GO:0008710">
    <property type="term" value="F:8-amino-7-oxononanoate synthase activity"/>
    <property type="evidence" value="ECO:0007669"/>
    <property type="project" value="UniProtKB-UniRule"/>
</dbReference>
<dbReference type="GO" id="GO:0030170">
    <property type="term" value="F:pyridoxal phosphate binding"/>
    <property type="evidence" value="ECO:0007669"/>
    <property type="project" value="UniProtKB-UniRule"/>
</dbReference>
<dbReference type="GO" id="GO:0009102">
    <property type="term" value="P:biotin biosynthetic process"/>
    <property type="evidence" value="ECO:0007669"/>
    <property type="project" value="UniProtKB-UniRule"/>
</dbReference>
<dbReference type="CDD" id="cd06454">
    <property type="entry name" value="KBL_like"/>
    <property type="match status" value="1"/>
</dbReference>
<dbReference type="FunFam" id="3.40.640.10:FF:000095">
    <property type="entry name" value="8-amino-7-oxononanoate synthase"/>
    <property type="match status" value="1"/>
</dbReference>
<dbReference type="FunFam" id="3.90.1150.10:FF:000036">
    <property type="entry name" value="8-amino-7-oxononanoate synthase"/>
    <property type="match status" value="1"/>
</dbReference>
<dbReference type="Gene3D" id="3.90.1150.10">
    <property type="entry name" value="Aspartate Aminotransferase, domain 1"/>
    <property type="match status" value="1"/>
</dbReference>
<dbReference type="Gene3D" id="3.40.640.10">
    <property type="entry name" value="Type I PLP-dependent aspartate aminotransferase-like (Major domain)"/>
    <property type="match status" value="1"/>
</dbReference>
<dbReference type="HAMAP" id="MF_01693">
    <property type="entry name" value="BioF_aminotrans_2"/>
    <property type="match status" value="1"/>
</dbReference>
<dbReference type="InterPro" id="IPR001917">
    <property type="entry name" value="Aminotrans_II_pyridoxalP_BS"/>
</dbReference>
<dbReference type="InterPro" id="IPR004839">
    <property type="entry name" value="Aminotransferase_I/II_large"/>
</dbReference>
<dbReference type="InterPro" id="IPR050087">
    <property type="entry name" value="AON_synthase_class-II"/>
</dbReference>
<dbReference type="InterPro" id="IPR004723">
    <property type="entry name" value="AONS_Archaea/Proteobacteria"/>
</dbReference>
<dbReference type="InterPro" id="IPR022834">
    <property type="entry name" value="AONS_Proteobacteria"/>
</dbReference>
<dbReference type="InterPro" id="IPR015424">
    <property type="entry name" value="PyrdxlP-dep_Trfase"/>
</dbReference>
<dbReference type="InterPro" id="IPR015421">
    <property type="entry name" value="PyrdxlP-dep_Trfase_major"/>
</dbReference>
<dbReference type="InterPro" id="IPR015422">
    <property type="entry name" value="PyrdxlP-dep_Trfase_small"/>
</dbReference>
<dbReference type="NCBIfam" id="TIGR00858">
    <property type="entry name" value="bioF"/>
    <property type="match status" value="1"/>
</dbReference>
<dbReference type="PANTHER" id="PTHR13693:SF100">
    <property type="entry name" value="8-AMINO-7-OXONONANOATE SYNTHASE"/>
    <property type="match status" value="1"/>
</dbReference>
<dbReference type="PANTHER" id="PTHR13693">
    <property type="entry name" value="CLASS II AMINOTRANSFERASE/8-AMINO-7-OXONONANOATE SYNTHASE"/>
    <property type="match status" value="1"/>
</dbReference>
<dbReference type="Pfam" id="PF00155">
    <property type="entry name" value="Aminotran_1_2"/>
    <property type="match status" value="1"/>
</dbReference>
<dbReference type="SUPFAM" id="SSF53383">
    <property type="entry name" value="PLP-dependent transferases"/>
    <property type="match status" value="1"/>
</dbReference>
<dbReference type="PROSITE" id="PS00599">
    <property type="entry name" value="AA_TRANSFER_CLASS_2"/>
    <property type="match status" value="1"/>
</dbReference>
<reference key="1">
    <citation type="journal article" date="2005" name="Nucleic Acids Res.">
        <title>Genome dynamics and diversity of Shigella species, the etiologic agents of bacillary dysentery.</title>
        <authorList>
            <person name="Yang F."/>
            <person name="Yang J."/>
            <person name="Zhang X."/>
            <person name="Chen L."/>
            <person name="Jiang Y."/>
            <person name="Yan Y."/>
            <person name="Tang X."/>
            <person name="Wang J."/>
            <person name="Xiong Z."/>
            <person name="Dong J."/>
            <person name="Xue Y."/>
            <person name="Zhu Y."/>
            <person name="Xu X."/>
            <person name="Sun L."/>
            <person name="Chen S."/>
            <person name="Nie H."/>
            <person name="Peng J."/>
            <person name="Xu J."/>
            <person name="Wang Y."/>
            <person name="Yuan Z."/>
            <person name="Wen Y."/>
            <person name="Yao Z."/>
            <person name="Shen Y."/>
            <person name="Qiang B."/>
            <person name="Hou Y."/>
            <person name="Yu J."/>
            <person name="Jin Q."/>
        </authorList>
    </citation>
    <scope>NUCLEOTIDE SEQUENCE [LARGE SCALE GENOMIC DNA]</scope>
    <source>
        <strain>Ss046</strain>
    </source>
</reference>
<gene>
    <name evidence="1" type="primary">bioF</name>
    <name type="ordered locus">SSON_0755</name>
</gene>
<sequence length="384" mass="41703">MSWQEKINAALDARRTADALRRRYPVAQGAGRWLVADDRQYLNFSSNDYLGLSHHPQIIRAWQQGAEKFGVGSGGSGHVSGYSVVHQALEEELAEWLGYSRALLFISGFAANQAVIAAMMAKEDRIVADRLSHASLLEAASLSPSQLRRFTHNDVAHLARLLASPCPGQQLVVTEGVFSMDGDSAPLAEIQQVTQQHNGWLMVDDAHGTGVIGEQGRGSCWLQKVKPELLVVTFGKGFGVSGAAVLCSSTVADYLLQFARHLIYSTSMPPAQAQALRASLAVIRRDEGDARREKLVSLIARFRAGVQDLPFTLADSCSAIQPLIVGDNSRALQLAEKLRQQGCWVTAIRPPTVPAGTARLRLTLTAAHEMQDIDRLLEVLHGNG</sequence>
<accession>Q3Z408</accession>
<proteinExistence type="inferred from homology"/>
<feature type="chain" id="PRO_0000381113" description="8-amino-7-oxononanoate synthase">
    <location>
        <begin position="1"/>
        <end position="384"/>
    </location>
</feature>
<feature type="binding site" evidence="1">
    <location>
        <position position="21"/>
    </location>
    <ligand>
        <name>substrate</name>
    </ligand>
</feature>
<feature type="binding site" evidence="1">
    <location>
        <begin position="108"/>
        <end position="109"/>
    </location>
    <ligand>
        <name>pyridoxal 5'-phosphate</name>
        <dbReference type="ChEBI" id="CHEBI:597326"/>
    </ligand>
</feature>
<feature type="binding site" evidence="1">
    <location>
        <position position="133"/>
    </location>
    <ligand>
        <name>substrate</name>
    </ligand>
</feature>
<feature type="binding site" evidence="1">
    <location>
        <position position="179"/>
    </location>
    <ligand>
        <name>pyridoxal 5'-phosphate</name>
        <dbReference type="ChEBI" id="CHEBI:597326"/>
    </ligand>
</feature>
<feature type="binding site" evidence="1">
    <location>
        <position position="207"/>
    </location>
    <ligand>
        <name>pyridoxal 5'-phosphate</name>
        <dbReference type="ChEBI" id="CHEBI:597326"/>
    </ligand>
</feature>
<feature type="binding site" evidence="1">
    <location>
        <position position="233"/>
    </location>
    <ligand>
        <name>pyridoxal 5'-phosphate</name>
        <dbReference type="ChEBI" id="CHEBI:597326"/>
    </ligand>
</feature>
<feature type="binding site" evidence="1">
    <location>
        <position position="352"/>
    </location>
    <ligand>
        <name>substrate</name>
    </ligand>
</feature>
<feature type="modified residue" description="N6-(pyridoxal phosphate)lysine" evidence="1">
    <location>
        <position position="236"/>
    </location>
</feature>
<protein>
    <recommendedName>
        <fullName evidence="1">8-amino-7-oxononanoate synthase</fullName>
        <shortName evidence="1">AONS</shortName>
        <ecNumber evidence="1">2.3.1.47</ecNumber>
    </recommendedName>
    <alternativeName>
        <fullName evidence="1">7-keto-8-amino-pelargonic acid synthase</fullName>
        <shortName evidence="1">7-KAP synthase</shortName>
        <shortName evidence="1">KAPA synthase</shortName>
    </alternativeName>
    <alternativeName>
        <fullName evidence="1">8-amino-7-ketopelargonate synthase</fullName>
    </alternativeName>
</protein>
<evidence type="ECO:0000255" key="1">
    <source>
        <dbReference type="HAMAP-Rule" id="MF_01693"/>
    </source>
</evidence>
<organism>
    <name type="scientific">Shigella sonnei (strain Ss046)</name>
    <dbReference type="NCBI Taxonomy" id="300269"/>
    <lineage>
        <taxon>Bacteria</taxon>
        <taxon>Pseudomonadati</taxon>
        <taxon>Pseudomonadota</taxon>
        <taxon>Gammaproteobacteria</taxon>
        <taxon>Enterobacterales</taxon>
        <taxon>Enterobacteriaceae</taxon>
        <taxon>Shigella</taxon>
    </lineage>
</organism>